<proteinExistence type="inferred from homology"/>
<dbReference type="EC" id="3.1.3.84"/>
<dbReference type="EMBL" id="AAHF01000004">
    <property type="protein sequence ID" value="EAL90984.2"/>
    <property type="molecule type" value="Genomic_DNA"/>
</dbReference>
<dbReference type="RefSeq" id="XP_753022.2">
    <property type="nucleotide sequence ID" value="XM_747929.2"/>
</dbReference>
<dbReference type="SMR" id="Q4WRE8"/>
<dbReference type="FunCoup" id="Q4WRE8">
    <property type="interactions" value="3"/>
</dbReference>
<dbReference type="STRING" id="330879.Q4WRE8"/>
<dbReference type="EnsemblFungi" id="EAL90984">
    <property type="protein sequence ID" value="EAL90984"/>
    <property type="gene ID" value="AFUA_1G16556"/>
</dbReference>
<dbReference type="GeneID" id="3510047"/>
<dbReference type="KEGG" id="afm:AFUA_1G16556"/>
<dbReference type="eggNOG" id="ENOG502S60W">
    <property type="taxonomic scope" value="Eukaryota"/>
</dbReference>
<dbReference type="HOGENOM" id="CLU_054419_1_0_1"/>
<dbReference type="InParanoid" id="Q4WRE8"/>
<dbReference type="OMA" id="CQGSWGK"/>
<dbReference type="OrthoDB" id="2155246at2759"/>
<dbReference type="Proteomes" id="UP000002530">
    <property type="component" value="Chromosome 1"/>
</dbReference>
<dbReference type="GO" id="GO:0005654">
    <property type="term" value="C:nucleoplasm"/>
    <property type="evidence" value="ECO:0000318"/>
    <property type="project" value="GO_Central"/>
</dbReference>
<dbReference type="GO" id="GO:0047407">
    <property type="term" value="F:ADP-ribosyl-[dinitrogen reductase] hydrolase activity"/>
    <property type="evidence" value="ECO:0000318"/>
    <property type="project" value="GO_Central"/>
</dbReference>
<dbReference type="GO" id="GO:0004721">
    <property type="term" value="F:phosphoprotein phosphatase activity"/>
    <property type="evidence" value="ECO:0007669"/>
    <property type="project" value="UniProtKB-KW"/>
</dbReference>
<dbReference type="GO" id="GO:0006974">
    <property type="term" value="P:DNA damage response"/>
    <property type="evidence" value="ECO:0000318"/>
    <property type="project" value="GO_Central"/>
</dbReference>
<dbReference type="GO" id="GO:0042278">
    <property type="term" value="P:purine nucleoside metabolic process"/>
    <property type="evidence" value="ECO:0000318"/>
    <property type="project" value="GO_Central"/>
</dbReference>
<dbReference type="CDD" id="cd02901">
    <property type="entry name" value="Macro_Poa1p-like"/>
    <property type="match status" value="1"/>
</dbReference>
<dbReference type="Gene3D" id="3.40.220.10">
    <property type="entry name" value="Leucine Aminopeptidase, subunit E, domain 1"/>
    <property type="match status" value="1"/>
</dbReference>
<dbReference type="InterPro" id="IPR050892">
    <property type="entry name" value="ADP-ribose_metab_enzymes"/>
</dbReference>
<dbReference type="InterPro" id="IPR002589">
    <property type="entry name" value="Macro_dom"/>
</dbReference>
<dbReference type="InterPro" id="IPR043472">
    <property type="entry name" value="Macro_dom-like"/>
</dbReference>
<dbReference type="PANTHER" id="PTHR12521:SF0">
    <property type="entry name" value="ADP-RIBOSE GLYCOHYDROLASE OARD1"/>
    <property type="match status" value="1"/>
</dbReference>
<dbReference type="PANTHER" id="PTHR12521">
    <property type="entry name" value="PROTEIN C6ORF130"/>
    <property type="match status" value="1"/>
</dbReference>
<dbReference type="SMART" id="SM00506">
    <property type="entry name" value="A1pp"/>
    <property type="match status" value="1"/>
</dbReference>
<dbReference type="SUPFAM" id="SSF52949">
    <property type="entry name" value="Macro domain-like"/>
    <property type="match status" value="1"/>
</dbReference>
<dbReference type="PROSITE" id="PS51154">
    <property type="entry name" value="MACRO"/>
    <property type="match status" value="1"/>
</dbReference>
<sequence>MDPPSVRSKITEIEGDLFHAPDGAALIHACNCQGSWGKGIAKAFKDKYPAAFAIYRSHCQNLLSSPRYMFEPDLQSEESHARSSRDVRLPEGTALIIPPQKRDSEANGKKHWIICLFTSRGFGRAVSPPDVIVRNTELAVADMTRQLAELQTDQSSREESVGELWSCRFNAGLFGVPWERSRRVLEDAGLEVTVVRPHGG</sequence>
<gene>
    <name type="primary">poa1</name>
    <name type="ORF">AFUA_1G16556</name>
</gene>
<protein>
    <recommendedName>
        <fullName>ADP-ribose 1''-phosphate phosphatase</fullName>
        <ecNumber>3.1.3.84</ecNumber>
    </recommendedName>
</protein>
<organism>
    <name type="scientific">Aspergillus fumigatus (strain ATCC MYA-4609 / CBS 101355 / FGSC A1100 / Af293)</name>
    <name type="common">Neosartorya fumigata</name>
    <dbReference type="NCBI Taxonomy" id="330879"/>
    <lineage>
        <taxon>Eukaryota</taxon>
        <taxon>Fungi</taxon>
        <taxon>Dikarya</taxon>
        <taxon>Ascomycota</taxon>
        <taxon>Pezizomycotina</taxon>
        <taxon>Eurotiomycetes</taxon>
        <taxon>Eurotiomycetidae</taxon>
        <taxon>Eurotiales</taxon>
        <taxon>Aspergillaceae</taxon>
        <taxon>Aspergillus</taxon>
        <taxon>Aspergillus subgen. Fumigati</taxon>
    </lineage>
</organism>
<feature type="chain" id="PRO_0000324902" description="ADP-ribose 1''-phosphate phosphatase">
    <location>
        <begin position="1"/>
        <end position="200"/>
    </location>
</feature>
<feature type="domain" description="Macro" evidence="2">
    <location>
        <begin position="1"/>
        <end position="200"/>
    </location>
</feature>
<feature type="binding site" evidence="1">
    <location>
        <begin position="15"/>
        <end position="17"/>
    </location>
    <ligand>
        <name>substrate</name>
    </ligand>
</feature>
<feature type="binding site" evidence="1">
    <location>
        <begin position="29"/>
        <end position="31"/>
    </location>
    <ligand>
        <name>substrate</name>
    </ligand>
</feature>
<feature type="binding site" evidence="1">
    <location>
        <begin position="36"/>
        <end position="41"/>
    </location>
    <ligand>
        <name>substrate</name>
    </ligand>
</feature>
<feature type="binding site" evidence="1">
    <location>
        <begin position="169"/>
        <end position="175"/>
    </location>
    <ligand>
        <name>substrate</name>
    </ligand>
</feature>
<name>POA1_ASPFU</name>
<accession>Q4WRE8</accession>
<evidence type="ECO:0000250" key="1"/>
<evidence type="ECO:0000255" key="2">
    <source>
        <dbReference type="PROSITE-ProRule" id="PRU00490"/>
    </source>
</evidence>
<evidence type="ECO:0000305" key="3"/>
<reference key="1">
    <citation type="journal article" date="2005" name="Nature">
        <title>Genomic sequence of the pathogenic and allergenic filamentous fungus Aspergillus fumigatus.</title>
        <authorList>
            <person name="Nierman W.C."/>
            <person name="Pain A."/>
            <person name="Anderson M.J."/>
            <person name="Wortman J.R."/>
            <person name="Kim H.S."/>
            <person name="Arroyo J."/>
            <person name="Berriman M."/>
            <person name="Abe K."/>
            <person name="Archer D.B."/>
            <person name="Bermejo C."/>
            <person name="Bennett J.W."/>
            <person name="Bowyer P."/>
            <person name="Chen D."/>
            <person name="Collins M."/>
            <person name="Coulsen R."/>
            <person name="Davies R."/>
            <person name="Dyer P.S."/>
            <person name="Farman M.L."/>
            <person name="Fedorova N."/>
            <person name="Fedorova N.D."/>
            <person name="Feldblyum T.V."/>
            <person name="Fischer R."/>
            <person name="Fosker N."/>
            <person name="Fraser A."/>
            <person name="Garcia J.L."/>
            <person name="Garcia M.J."/>
            <person name="Goble A."/>
            <person name="Goldman G.H."/>
            <person name="Gomi K."/>
            <person name="Griffith-Jones S."/>
            <person name="Gwilliam R."/>
            <person name="Haas B.J."/>
            <person name="Haas H."/>
            <person name="Harris D.E."/>
            <person name="Horiuchi H."/>
            <person name="Huang J."/>
            <person name="Humphray S."/>
            <person name="Jimenez J."/>
            <person name="Keller N."/>
            <person name="Khouri H."/>
            <person name="Kitamoto K."/>
            <person name="Kobayashi T."/>
            <person name="Konzack S."/>
            <person name="Kulkarni R."/>
            <person name="Kumagai T."/>
            <person name="Lafton A."/>
            <person name="Latge J.-P."/>
            <person name="Li W."/>
            <person name="Lord A."/>
            <person name="Lu C."/>
            <person name="Majoros W.H."/>
            <person name="May G.S."/>
            <person name="Miller B.L."/>
            <person name="Mohamoud Y."/>
            <person name="Molina M."/>
            <person name="Monod M."/>
            <person name="Mouyna I."/>
            <person name="Mulligan S."/>
            <person name="Murphy L.D."/>
            <person name="O'Neil S."/>
            <person name="Paulsen I."/>
            <person name="Penalva M.A."/>
            <person name="Pertea M."/>
            <person name="Price C."/>
            <person name="Pritchard B.L."/>
            <person name="Quail M.A."/>
            <person name="Rabbinowitsch E."/>
            <person name="Rawlins N."/>
            <person name="Rajandream M.A."/>
            <person name="Reichard U."/>
            <person name="Renauld H."/>
            <person name="Robson G.D."/>
            <person name="Rodriguez de Cordoba S."/>
            <person name="Rodriguez-Pena J.M."/>
            <person name="Ronning C.M."/>
            <person name="Rutter S."/>
            <person name="Salzberg S.L."/>
            <person name="Sanchez M."/>
            <person name="Sanchez-Ferrero J.C."/>
            <person name="Saunders D."/>
            <person name="Seeger K."/>
            <person name="Squares R."/>
            <person name="Squares S."/>
            <person name="Takeuchi M."/>
            <person name="Tekaia F."/>
            <person name="Turner G."/>
            <person name="Vazquez de Aldana C.R."/>
            <person name="Weidman J."/>
            <person name="White O."/>
            <person name="Woodward J.R."/>
            <person name="Yu J.-H."/>
            <person name="Fraser C.M."/>
            <person name="Galagan J.E."/>
            <person name="Asai K."/>
            <person name="Machida M."/>
            <person name="Hall N."/>
            <person name="Barrell B.G."/>
            <person name="Denning D.W."/>
        </authorList>
    </citation>
    <scope>NUCLEOTIDE SEQUENCE [LARGE SCALE GENOMIC DNA]</scope>
    <source>
        <strain>ATCC MYA-4609 / CBS 101355 / FGSC A1100 / Af293</strain>
    </source>
</reference>
<keyword id="KW-0378">Hydrolase</keyword>
<keyword id="KW-0904">Protein phosphatase</keyword>
<keyword id="KW-1185">Reference proteome</keyword>
<comment type="function">
    <text evidence="1">Highly specific phosphatase involved in the metabolism of ADP-ribose 1''-phosphate (Appr1p) which is produced as a consequence of tRNA splicing.</text>
</comment>
<comment type="catalytic activity">
    <reaction>
        <text>ADP-alpha-D-ribose 1''-phosphate + H2O = ADP-D-ribose + phosphate</text>
        <dbReference type="Rhea" id="RHEA:25029"/>
        <dbReference type="ChEBI" id="CHEBI:15377"/>
        <dbReference type="ChEBI" id="CHEBI:43474"/>
        <dbReference type="ChEBI" id="CHEBI:57967"/>
        <dbReference type="ChEBI" id="CHEBI:58753"/>
        <dbReference type="EC" id="3.1.3.84"/>
    </reaction>
</comment>
<comment type="similarity">
    <text evidence="3">Belongs to the POA1 family.</text>
</comment>